<geneLocation type="chloroplast"/>
<dbReference type="EMBL" id="AF041468">
    <property type="protein sequence ID" value="AAC35725.1"/>
    <property type="molecule type" value="Genomic_DNA"/>
</dbReference>
<dbReference type="RefSeq" id="NP_050791.1">
    <property type="nucleotide sequence ID" value="NC_000926.1"/>
</dbReference>
<dbReference type="SMR" id="O46915"/>
<dbReference type="GeneID" id="857099"/>
<dbReference type="HOGENOM" id="CLU_082184_2_2_1"/>
<dbReference type="OMA" id="GDCIIVI"/>
<dbReference type="GO" id="GO:0009507">
    <property type="term" value="C:chloroplast"/>
    <property type="evidence" value="ECO:0007669"/>
    <property type="project" value="UniProtKB-SubCell"/>
</dbReference>
<dbReference type="GO" id="GO:0022625">
    <property type="term" value="C:cytosolic large ribosomal subunit"/>
    <property type="evidence" value="ECO:0007669"/>
    <property type="project" value="TreeGrafter"/>
</dbReference>
<dbReference type="GO" id="GO:0003729">
    <property type="term" value="F:mRNA binding"/>
    <property type="evidence" value="ECO:0007669"/>
    <property type="project" value="TreeGrafter"/>
</dbReference>
<dbReference type="GO" id="GO:0003735">
    <property type="term" value="F:structural constituent of ribosome"/>
    <property type="evidence" value="ECO:0007669"/>
    <property type="project" value="InterPro"/>
</dbReference>
<dbReference type="GO" id="GO:0017148">
    <property type="term" value="P:negative regulation of translation"/>
    <property type="evidence" value="ECO:0007669"/>
    <property type="project" value="TreeGrafter"/>
</dbReference>
<dbReference type="GO" id="GO:0006412">
    <property type="term" value="P:translation"/>
    <property type="evidence" value="ECO:0007669"/>
    <property type="project" value="UniProtKB-UniRule"/>
</dbReference>
<dbReference type="CDD" id="cd00392">
    <property type="entry name" value="Ribosomal_L13"/>
    <property type="match status" value="1"/>
</dbReference>
<dbReference type="Gene3D" id="3.90.1180.10">
    <property type="entry name" value="Ribosomal protein L13"/>
    <property type="match status" value="1"/>
</dbReference>
<dbReference type="HAMAP" id="MF_01366">
    <property type="entry name" value="Ribosomal_uL13"/>
    <property type="match status" value="1"/>
</dbReference>
<dbReference type="InterPro" id="IPR005822">
    <property type="entry name" value="Ribosomal_uL13"/>
</dbReference>
<dbReference type="InterPro" id="IPR005823">
    <property type="entry name" value="Ribosomal_uL13_bac-type"/>
</dbReference>
<dbReference type="InterPro" id="IPR036899">
    <property type="entry name" value="Ribosomal_uL13_sf"/>
</dbReference>
<dbReference type="NCBIfam" id="TIGR01066">
    <property type="entry name" value="rplM_bact"/>
    <property type="match status" value="1"/>
</dbReference>
<dbReference type="PANTHER" id="PTHR11545:SF2">
    <property type="entry name" value="LARGE RIBOSOMAL SUBUNIT PROTEIN UL13M"/>
    <property type="match status" value="1"/>
</dbReference>
<dbReference type="PANTHER" id="PTHR11545">
    <property type="entry name" value="RIBOSOMAL PROTEIN L13"/>
    <property type="match status" value="1"/>
</dbReference>
<dbReference type="Pfam" id="PF00572">
    <property type="entry name" value="Ribosomal_L13"/>
    <property type="match status" value="1"/>
</dbReference>
<dbReference type="PIRSF" id="PIRSF002181">
    <property type="entry name" value="Ribosomal_L13"/>
    <property type="match status" value="1"/>
</dbReference>
<dbReference type="SUPFAM" id="SSF52161">
    <property type="entry name" value="Ribosomal protein L13"/>
    <property type="match status" value="1"/>
</dbReference>
<keyword id="KW-0150">Chloroplast</keyword>
<keyword id="KW-0934">Plastid</keyword>
<keyword id="KW-0687">Ribonucleoprotein</keyword>
<keyword id="KW-0689">Ribosomal protein</keyword>
<reference key="1">
    <citation type="journal article" date="1997" name="Biochem. Mol. Biol. Int.">
        <title>The large ribosomal protein gene cluster of a cryptomonad plastid: gene organization, sequence and evolutionary implications.</title>
        <authorList>
            <person name="Wang S.L."/>
            <person name="Liu X.-Q."/>
            <person name="Douglas S.E."/>
        </authorList>
    </citation>
    <scope>NUCLEOTIDE SEQUENCE [GENOMIC DNA]</scope>
</reference>
<reference key="2">
    <citation type="journal article" date="1999" name="J. Mol. Evol.">
        <title>The plastid genome of the cryptophyte alga, Guillardia theta: complete sequence and conserved synteny groups confirm its common ancestry with red algae.</title>
        <authorList>
            <person name="Douglas S.E."/>
            <person name="Penny S.L."/>
        </authorList>
    </citation>
    <scope>NUCLEOTIDE SEQUENCE [LARGE SCALE GENOMIC DNA]</scope>
</reference>
<accession>O46915</accession>
<evidence type="ECO:0000255" key="1">
    <source>
        <dbReference type="HAMAP-Rule" id="MF_01366"/>
    </source>
</evidence>
<evidence type="ECO:0000305" key="2"/>
<sequence>MNKTIIREGKINLGKWFIIDATDKNLGRLASETAKTLVGKYDPLYAPNVNPKNIIVIINADKIRVTGNKKFDKFYYRHSGQVGGLTIETFNELQSRLPGRILEKAVKGILPKGPLGRELFNNLKVYAGSSHPHEAQNPVALVM</sequence>
<feature type="chain" id="PRO_0000133766" description="Large ribosomal subunit protein uL13c">
    <location>
        <begin position="1"/>
        <end position="143"/>
    </location>
</feature>
<comment type="subunit">
    <text evidence="1">Part of the 50S ribosomal subunit.</text>
</comment>
<comment type="subcellular location">
    <subcellularLocation>
        <location>Plastid</location>
        <location>Chloroplast</location>
    </subcellularLocation>
</comment>
<comment type="similarity">
    <text evidence="1">Belongs to the universal ribosomal protein uL13 family.</text>
</comment>
<protein>
    <recommendedName>
        <fullName evidence="1">Large ribosomal subunit protein uL13c</fullName>
    </recommendedName>
    <alternativeName>
        <fullName evidence="2">50S ribosomal protein L13, chloroplastic</fullName>
    </alternativeName>
</protein>
<organism>
    <name type="scientific">Guillardia theta</name>
    <name type="common">Cryptophyte</name>
    <name type="synonym">Cryptomonas phi</name>
    <dbReference type="NCBI Taxonomy" id="55529"/>
    <lineage>
        <taxon>Eukaryota</taxon>
        <taxon>Cryptophyceae</taxon>
        <taxon>Pyrenomonadales</taxon>
        <taxon>Geminigeraceae</taxon>
        <taxon>Guillardia</taxon>
    </lineage>
</organism>
<proteinExistence type="inferred from homology"/>
<gene>
    <name evidence="1" type="primary">rpl13</name>
</gene>
<name>RK13_GUITH</name>